<sequence>MPVTQEEIIAGIAEIIEEVTGIEPSEITPEKSFVDDLDIDSLSMVEIAVQTEDKYGVKIPDEDLAGLRTVGDVVAYIQKLEEENPEAAQALRAKIESENPDAVANVQARLEAESK</sequence>
<organism>
    <name type="scientific">Mycobacterium tuberculosis (strain ATCC 25618 / H37Rv)</name>
    <dbReference type="NCBI Taxonomy" id="83332"/>
    <lineage>
        <taxon>Bacteria</taxon>
        <taxon>Bacillati</taxon>
        <taxon>Actinomycetota</taxon>
        <taxon>Actinomycetes</taxon>
        <taxon>Mycobacteriales</taxon>
        <taxon>Mycobacteriaceae</taxon>
        <taxon>Mycobacterium</taxon>
        <taxon>Mycobacterium tuberculosis complex</taxon>
    </lineage>
</organism>
<name>ACPM_MYCTU</name>
<reference key="1">
    <citation type="journal article" date="1998" name="Nature">
        <title>Deciphering the biology of Mycobacterium tuberculosis from the complete genome sequence.</title>
        <authorList>
            <person name="Cole S.T."/>
            <person name="Brosch R."/>
            <person name="Parkhill J."/>
            <person name="Garnier T."/>
            <person name="Churcher C.M."/>
            <person name="Harris D.E."/>
            <person name="Gordon S.V."/>
            <person name="Eiglmeier K."/>
            <person name="Gas S."/>
            <person name="Barry C.E. III"/>
            <person name="Tekaia F."/>
            <person name="Badcock K."/>
            <person name="Basham D."/>
            <person name="Brown D."/>
            <person name="Chillingworth T."/>
            <person name="Connor R."/>
            <person name="Davies R.M."/>
            <person name="Devlin K."/>
            <person name="Feltwell T."/>
            <person name="Gentles S."/>
            <person name="Hamlin N."/>
            <person name="Holroyd S."/>
            <person name="Hornsby T."/>
            <person name="Jagels K."/>
            <person name="Krogh A."/>
            <person name="McLean J."/>
            <person name="Moule S."/>
            <person name="Murphy L.D."/>
            <person name="Oliver S."/>
            <person name="Osborne J."/>
            <person name="Quail M.A."/>
            <person name="Rajandream M.A."/>
            <person name="Rogers J."/>
            <person name="Rutter S."/>
            <person name="Seeger K."/>
            <person name="Skelton S."/>
            <person name="Squares S."/>
            <person name="Squares R."/>
            <person name="Sulston J.E."/>
            <person name="Taylor K."/>
            <person name="Whitehead S."/>
            <person name="Barrell B.G."/>
        </authorList>
    </citation>
    <scope>NUCLEOTIDE SEQUENCE [LARGE SCALE GENOMIC DNA]</scope>
    <source>
        <strain>ATCC 25618 / H37Rv</strain>
    </source>
</reference>
<reference key="2">
    <citation type="journal article" date="2008" name="BMC Syst. Biol.">
        <title>targetTB: a target identification pipeline for Mycobacterium tuberculosis through an interactome, reactome and genome-scale structural analysis.</title>
        <authorList>
            <person name="Raman K."/>
            <person name="Yeturu K."/>
            <person name="Chandra N."/>
        </authorList>
    </citation>
    <scope>IDENTIFICATION AS A DRUG TARGET [LARGE SCALE ANALYSIS]</scope>
</reference>
<reference key="3">
    <citation type="journal article" date="2011" name="Mol. Cell. Proteomics">
        <title>Proteogenomic analysis of Mycobacterium tuberculosis by high resolution mass spectrometry.</title>
        <authorList>
            <person name="Kelkar D.S."/>
            <person name="Kumar D."/>
            <person name="Kumar P."/>
            <person name="Balakrishnan L."/>
            <person name="Muthusamy B."/>
            <person name="Yadav A.K."/>
            <person name="Shrivastava P."/>
            <person name="Marimuthu A."/>
            <person name="Anand S."/>
            <person name="Sundaram H."/>
            <person name="Kingsbury R."/>
            <person name="Harsha H.C."/>
            <person name="Nair B."/>
            <person name="Prasad T.S."/>
            <person name="Chauhan D.S."/>
            <person name="Katoch K."/>
            <person name="Katoch V.M."/>
            <person name="Kumar P."/>
            <person name="Chaerkady R."/>
            <person name="Ramachandran S."/>
            <person name="Dash D."/>
            <person name="Pandey A."/>
        </authorList>
    </citation>
    <scope>IDENTIFICATION BY MASS SPECTROMETRY [LARGE SCALE ANALYSIS]</scope>
    <source>
        <strain>ATCC 25618 / H37Rv</strain>
    </source>
</reference>
<reference key="4">
    <citation type="journal article" date="2015" name="Biochemistry">
        <title>AcpM, the meromycolate extension acyl carrier protein of Mycobacterium tuberculosis, is activated by the 4'-phosphopantetheinyl transferase PptT, a potential target of the multistep mycolic acid biosynthesis.</title>
        <authorList>
            <person name="Zimhony O."/>
            <person name="Schwarz A."/>
            <person name="Raitses-Gurevich M."/>
            <person name="Peleg Y."/>
            <person name="Dym O."/>
            <person name="Albeck S."/>
            <person name="Burstein Y."/>
            <person name="Shakked Z."/>
        </authorList>
    </citation>
    <scope>PHOSPHOPANTETHEINYLATION AT SER-41</scope>
    <scope>MUTAGENESIS OF SER-41</scope>
</reference>
<proteinExistence type="evidence at protein level"/>
<dbReference type="EMBL" id="AL123456">
    <property type="protein sequence ID" value="CCP45024.1"/>
    <property type="molecule type" value="Genomic_DNA"/>
</dbReference>
<dbReference type="PIR" id="H70778">
    <property type="entry name" value="H70778"/>
</dbReference>
<dbReference type="RefSeq" id="NP_216760.1">
    <property type="nucleotide sequence ID" value="NC_000962.3"/>
</dbReference>
<dbReference type="RefSeq" id="WP_003411565.1">
    <property type="nucleotide sequence ID" value="NZ_NVQJ01000008.1"/>
</dbReference>
<dbReference type="PDB" id="1KLP">
    <property type="method" value="NMR"/>
    <property type="chains" value="A=1-115"/>
</dbReference>
<dbReference type="PDBsum" id="1KLP"/>
<dbReference type="SMR" id="P9WQF3"/>
<dbReference type="FunCoup" id="P9WQF3">
    <property type="interactions" value="368"/>
</dbReference>
<dbReference type="STRING" id="83332.Rv2244"/>
<dbReference type="PaxDb" id="83332-Rv2244"/>
<dbReference type="DNASU" id="888272"/>
<dbReference type="GeneID" id="45426224"/>
<dbReference type="GeneID" id="888272"/>
<dbReference type="KEGG" id="mtu:Rv2244"/>
<dbReference type="KEGG" id="mtv:RVBD_2244"/>
<dbReference type="TubercuList" id="Rv2244"/>
<dbReference type="eggNOG" id="COG0236">
    <property type="taxonomic scope" value="Bacteria"/>
</dbReference>
<dbReference type="InParanoid" id="P9WQF3"/>
<dbReference type="OrthoDB" id="9804551at2"/>
<dbReference type="EvolutionaryTrace" id="P9WQF3"/>
<dbReference type="Proteomes" id="UP000001584">
    <property type="component" value="Chromosome"/>
</dbReference>
<dbReference type="GO" id="GO:0005829">
    <property type="term" value="C:cytosol"/>
    <property type="evidence" value="ECO:0007005"/>
    <property type="project" value="MTBBASE"/>
</dbReference>
<dbReference type="GO" id="GO:0009274">
    <property type="term" value="C:peptidoglycan-based cell wall"/>
    <property type="evidence" value="ECO:0007005"/>
    <property type="project" value="MTBBASE"/>
</dbReference>
<dbReference type="GO" id="GO:0005886">
    <property type="term" value="C:plasma membrane"/>
    <property type="evidence" value="ECO:0007005"/>
    <property type="project" value="MTBBASE"/>
</dbReference>
<dbReference type="GO" id="GO:0000035">
    <property type="term" value="F:acyl binding"/>
    <property type="evidence" value="ECO:0000314"/>
    <property type="project" value="MTBBASE"/>
</dbReference>
<dbReference type="GO" id="GO:0000036">
    <property type="term" value="F:acyl carrier activity"/>
    <property type="evidence" value="ECO:0000314"/>
    <property type="project" value="MTBBASE"/>
</dbReference>
<dbReference type="GO" id="GO:0006637">
    <property type="term" value="P:acyl-CoA metabolic process"/>
    <property type="evidence" value="ECO:0000314"/>
    <property type="project" value="MTBBASE"/>
</dbReference>
<dbReference type="GO" id="GO:0009245">
    <property type="term" value="P:lipid A biosynthetic process"/>
    <property type="evidence" value="ECO:0000318"/>
    <property type="project" value="GO_Central"/>
</dbReference>
<dbReference type="FunFam" id="1.10.1200.10:FF:000010">
    <property type="entry name" value="Acyl carrier protein"/>
    <property type="match status" value="1"/>
</dbReference>
<dbReference type="Gene3D" id="1.10.1200.10">
    <property type="entry name" value="ACP-like"/>
    <property type="match status" value="1"/>
</dbReference>
<dbReference type="HAMAP" id="MF_01217">
    <property type="entry name" value="Acyl_carrier"/>
    <property type="match status" value="1"/>
</dbReference>
<dbReference type="InterPro" id="IPR003231">
    <property type="entry name" value="ACP"/>
</dbReference>
<dbReference type="InterPro" id="IPR036736">
    <property type="entry name" value="ACP-like_sf"/>
</dbReference>
<dbReference type="InterPro" id="IPR053393">
    <property type="entry name" value="Meromycolate-ACP"/>
</dbReference>
<dbReference type="InterPro" id="IPR009081">
    <property type="entry name" value="PP-bd_ACP"/>
</dbReference>
<dbReference type="NCBIfam" id="NF040636">
    <property type="entry name" value="AcpM"/>
    <property type="match status" value="1"/>
</dbReference>
<dbReference type="NCBIfam" id="NF002147">
    <property type="entry name" value="PRK00982.1-1"/>
    <property type="match status" value="1"/>
</dbReference>
<dbReference type="NCBIfam" id="NF002148">
    <property type="entry name" value="PRK00982.1-2"/>
    <property type="match status" value="1"/>
</dbReference>
<dbReference type="NCBIfam" id="NF002150">
    <property type="entry name" value="PRK00982.1-4"/>
    <property type="match status" value="1"/>
</dbReference>
<dbReference type="PANTHER" id="PTHR20863">
    <property type="entry name" value="ACYL CARRIER PROTEIN"/>
    <property type="match status" value="1"/>
</dbReference>
<dbReference type="PANTHER" id="PTHR20863:SF76">
    <property type="entry name" value="CARRIER DOMAIN-CONTAINING PROTEIN"/>
    <property type="match status" value="1"/>
</dbReference>
<dbReference type="Pfam" id="PF00550">
    <property type="entry name" value="PP-binding"/>
    <property type="match status" value="1"/>
</dbReference>
<dbReference type="SUPFAM" id="SSF47336">
    <property type="entry name" value="ACP-like"/>
    <property type="match status" value="1"/>
</dbReference>
<dbReference type="PROSITE" id="PS50075">
    <property type="entry name" value="CARRIER"/>
    <property type="match status" value="1"/>
</dbReference>
<comment type="function">
    <text evidence="1">Acyl carrier protein involved in meromycolate extension.</text>
</comment>
<comment type="subcellular location">
    <subcellularLocation>
        <location evidence="1">Cytoplasm</location>
    </subcellularLocation>
</comment>
<comment type="PTM">
    <text evidence="3">4'-phosphopantetheine is transferred from CoA to a specific serine of apo-AcpM by PptT.</text>
</comment>
<comment type="miscellaneous">
    <text>Was identified as a high-confidence drug target.</text>
</comment>
<comment type="similarity">
    <text evidence="4">Belongs to the acyl carrier protein (ACP) family.</text>
</comment>
<evidence type="ECO:0000250" key="1"/>
<evidence type="ECO:0000255" key="2">
    <source>
        <dbReference type="PROSITE-ProRule" id="PRU00258"/>
    </source>
</evidence>
<evidence type="ECO:0000269" key="3">
    <source>
    </source>
</evidence>
<evidence type="ECO:0000305" key="4"/>
<evidence type="ECO:0007829" key="5">
    <source>
        <dbReference type="PDB" id="1KLP"/>
    </source>
</evidence>
<keyword id="KW-0002">3D-structure</keyword>
<keyword id="KW-0963">Cytoplasm</keyword>
<keyword id="KW-0275">Fatty acid biosynthesis</keyword>
<keyword id="KW-0276">Fatty acid metabolism</keyword>
<keyword id="KW-0444">Lipid biosynthesis</keyword>
<keyword id="KW-0443">Lipid metabolism</keyword>
<keyword id="KW-0596">Phosphopantetheine</keyword>
<keyword id="KW-0597">Phosphoprotein</keyword>
<keyword id="KW-1185">Reference proteome</keyword>
<protein>
    <recommendedName>
        <fullName>Meromycolate extension acyl carrier protein</fullName>
        <shortName>ACP</shortName>
    </recommendedName>
</protein>
<accession>P9WQF3</accession>
<accession>L0T917</accession>
<accession>P0A4W6</accession>
<accession>Q10500</accession>
<gene>
    <name type="primary">acpM</name>
    <name type="ordered locus">Rv2244</name>
    <name type="ORF">MTCY427.25</name>
</gene>
<feature type="chain" id="PRO_0000180247" description="Meromycolate extension acyl carrier protein">
    <location>
        <begin position="1"/>
        <end position="115"/>
    </location>
</feature>
<feature type="domain" description="Carrier" evidence="2">
    <location>
        <begin position="3"/>
        <end position="81"/>
    </location>
</feature>
<feature type="modified residue" description="O-(pantetheine 4'-phosphoryl)serine" evidence="2 3">
    <location>
        <position position="41"/>
    </location>
</feature>
<feature type="mutagenesis site" description="Abolishes activation by PptT." evidence="3">
    <original>S</original>
    <variation>A</variation>
    <location>
        <position position="41"/>
    </location>
</feature>
<feature type="helix" evidence="5">
    <location>
        <begin position="5"/>
        <end position="16"/>
    </location>
</feature>
<feature type="turn" evidence="5">
    <location>
        <begin position="17"/>
        <end position="20"/>
    </location>
</feature>
<feature type="turn" evidence="5">
    <location>
        <begin position="24"/>
        <end position="26"/>
    </location>
</feature>
<feature type="turn" evidence="5">
    <location>
        <begin position="33"/>
        <end position="37"/>
    </location>
</feature>
<feature type="helix" evidence="5">
    <location>
        <begin position="40"/>
        <end position="54"/>
    </location>
</feature>
<feature type="helix" evidence="5">
    <location>
        <begin position="61"/>
        <end position="64"/>
    </location>
</feature>
<feature type="helix" evidence="5">
    <location>
        <begin position="70"/>
        <end position="81"/>
    </location>
</feature>
<feature type="strand" evidence="5">
    <location>
        <begin position="95"/>
        <end position="97"/>
    </location>
</feature>